<gene>
    <name type="primary">ald1</name>
    <name type="ordered locus">SACOL1478</name>
</gene>
<comment type="function">
    <text evidence="1">May play a role in cell wall synthesis as L-alanine is an important constituent of the peptidoglycan layer.</text>
</comment>
<comment type="catalytic activity">
    <reaction>
        <text>L-alanine + NAD(+) + H2O = pyruvate + NH4(+) + NADH + H(+)</text>
        <dbReference type="Rhea" id="RHEA:18405"/>
        <dbReference type="ChEBI" id="CHEBI:15361"/>
        <dbReference type="ChEBI" id="CHEBI:15377"/>
        <dbReference type="ChEBI" id="CHEBI:15378"/>
        <dbReference type="ChEBI" id="CHEBI:28938"/>
        <dbReference type="ChEBI" id="CHEBI:57540"/>
        <dbReference type="ChEBI" id="CHEBI:57945"/>
        <dbReference type="ChEBI" id="CHEBI:57972"/>
        <dbReference type="EC" id="1.4.1.1"/>
    </reaction>
</comment>
<comment type="pathway">
    <text>Amino-acid degradation; L-alanine degradation via dehydrogenase pathway; NH(3) and pyruvate from L-alanine: step 1/1.</text>
</comment>
<comment type="similarity">
    <text evidence="3">Belongs to the AlaDH/PNT family.</text>
</comment>
<proteinExistence type="inferred from homology"/>
<feature type="chain" id="PRO_0000198995" description="Alanine dehydrogenase 1">
    <location>
        <begin position="1"/>
        <end position="372"/>
    </location>
</feature>
<feature type="active site" evidence="2">
    <location>
        <position position="94"/>
    </location>
</feature>
<feature type="binding site" evidence="1">
    <location>
        <begin position="170"/>
        <end position="200"/>
    </location>
    <ligand>
        <name>NAD(+)</name>
        <dbReference type="ChEBI" id="CHEBI:57540"/>
    </ligand>
</feature>
<dbReference type="EC" id="1.4.1.1"/>
<dbReference type="EMBL" id="CP000046">
    <property type="protein sequence ID" value="AAW36674.1"/>
    <property type="molecule type" value="Genomic_DNA"/>
</dbReference>
<dbReference type="SMR" id="Q5HFY4"/>
<dbReference type="KEGG" id="sac:SACOL1478"/>
<dbReference type="HOGENOM" id="CLU_003376_3_0_9"/>
<dbReference type="UniPathway" id="UPA00527">
    <property type="reaction ID" value="UER00585"/>
</dbReference>
<dbReference type="Proteomes" id="UP000000530">
    <property type="component" value="Chromosome"/>
</dbReference>
<dbReference type="GO" id="GO:0005886">
    <property type="term" value="C:plasma membrane"/>
    <property type="evidence" value="ECO:0007669"/>
    <property type="project" value="TreeGrafter"/>
</dbReference>
<dbReference type="GO" id="GO:0000286">
    <property type="term" value="F:alanine dehydrogenase activity"/>
    <property type="evidence" value="ECO:0007669"/>
    <property type="project" value="UniProtKB-EC"/>
</dbReference>
<dbReference type="GO" id="GO:0042853">
    <property type="term" value="P:L-alanine catabolic process"/>
    <property type="evidence" value="ECO:0007669"/>
    <property type="project" value="UniProtKB-UniPathway"/>
</dbReference>
<dbReference type="CDD" id="cd05305">
    <property type="entry name" value="L-AlaDH"/>
    <property type="match status" value="1"/>
</dbReference>
<dbReference type="FunFam" id="3.40.50.720:FF:000433">
    <property type="entry name" value="Alanine dehydrogenase 1"/>
    <property type="match status" value="1"/>
</dbReference>
<dbReference type="Gene3D" id="3.40.50.720">
    <property type="entry name" value="NAD(P)-binding Rossmann-like Domain"/>
    <property type="match status" value="2"/>
</dbReference>
<dbReference type="InterPro" id="IPR008141">
    <property type="entry name" value="Ala_DH"/>
</dbReference>
<dbReference type="InterPro" id="IPR008143">
    <property type="entry name" value="Ala_DH/PNT_CS2"/>
</dbReference>
<dbReference type="InterPro" id="IPR008142">
    <property type="entry name" value="AlaDH/PNT_CS1"/>
</dbReference>
<dbReference type="InterPro" id="IPR007886">
    <property type="entry name" value="AlaDH/PNT_N"/>
</dbReference>
<dbReference type="InterPro" id="IPR007698">
    <property type="entry name" value="AlaDH/PNT_NAD(H)-bd"/>
</dbReference>
<dbReference type="InterPro" id="IPR036291">
    <property type="entry name" value="NAD(P)-bd_dom_sf"/>
</dbReference>
<dbReference type="NCBIfam" id="TIGR00518">
    <property type="entry name" value="alaDH"/>
    <property type="match status" value="1"/>
</dbReference>
<dbReference type="PANTHER" id="PTHR42795">
    <property type="entry name" value="ALANINE DEHYDROGENASE"/>
    <property type="match status" value="1"/>
</dbReference>
<dbReference type="PANTHER" id="PTHR42795:SF1">
    <property type="entry name" value="ALANINE DEHYDROGENASE"/>
    <property type="match status" value="1"/>
</dbReference>
<dbReference type="Pfam" id="PF01262">
    <property type="entry name" value="AlaDh_PNT_C"/>
    <property type="match status" value="1"/>
</dbReference>
<dbReference type="Pfam" id="PF05222">
    <property type="entry name" value="AlaDh_PNT_N"/>
    <property type="match status" value="1"/>
</dbReference>
<dbReference type="PIRSF" id="PIRSF000183">
    <property type="entry name" value="Alanine_dh"/>
    <property type="match status" value="1"/>
</dbReference>
<dbReference type="SMART" id="SM01002">
    <property type="entry name" value="AlaDh_PNT_C"/>
    <property type="match status" value="1"/>
</dbReference>
<dbReference type="SMART" id="SM01003">
    <property type="entry name" value="AlaDh_PNT_N"/>
    <property type="match status" value="1"/>
</dbReference>
<dbReference type="SUPFAM" id="SSF52283">
    <property type="entry name" value="Formate/glycerate dehydrogenase catalytic domain-like"/>
    <property type="match status" value="1"/>
</dbReference>
<dbReference type="SUPFAM" id="SSF51735">
    <property type="entry name" value="NAD(P)-binding Rossmann-fold domains"/>
    <property type="match status" value="1"/>
</dbReference>
<dbReference type="PROSITE" id="PS00836">
    <property type="entry name" value="ALADH_PNT_1"/>
    <property type="match status" value="1"/>
</dbReference>
<dbReference type="PROSITE" id="PS00837">
    <property type="entry name" value="ALADH_PNT_2"/>
    <property type="match status" value="1"/>
</dbReference>
<organism>
    <name type="scientific">Staphylococcus aureus (strain COL)</name>
    <dbReference type="NCBI Taxonomy" id="93062"/>
    <lineage>
        <taxon>Bacteria</taxon>
        <taxon>Bacillati</taxon>
        <taxon>Bacillota</taxon>
        <taxon>Bacilli</taxon>
        <taxon>Bacillales</taxon>
        <taxon>Staphylococcaceae</taxon>
        <taxon>Staphylococcus</taxon>
    </lineage>
</organism>
<evidence type="ECO:0000250" key="1"/>
<evidence type="ECO:0000255" key="2"/>
<evidence type="ECO:0000305" key="3"/>
<keyword id="KW-0520">NAD</keyword>
<keyword id="KW-0560">Oxidoreductase</keyword>
<accession>Q5HFY4</accession>
<protein>
    <recommendedName>
        <fullName>Alanine dehydrogenase 1</fullName>
        <ecNumber>1.4.1.1</ecNumber>
    </recommendedName>
</protein>
<sequence>MLVAVVKELKQGEGRVACTPENVRKLTDAGHKVIVEKNAGIGSGFSNDMYEKEGAKIVTHEQAWEADLVIKVKEPHESEYQYFKKNQIIWGFLHLASSKEIVEKMQEVGVTAISGETIIKNGKAELLAPMSAIAGQRSAIMGAYYSEAQHGGQGTLVTGVHENVDIPGSTYVIFGGGVAATNAANVALGLNAKVIIIELNDDRIKYLEDMYAEKDVTVVKSTPENLAEQIKKADVFISTILIPGAKPPKLVTREMVKSMKKGSVLIDIAIDQGGTIETIRPTTISDPVYEEEGVIHYGVPNQPGAVPRTSTMALAQGNIDYILEICDKGLEQAIKDNEALSTGVNIYQGQVTNQGLASSHDLDYKEILNVIE</sequence>
<name>DHA1_STAAC</name>
<reference key="1">
    <citation type="journal article" date="2005" name="J. Bacteriol.">
        <title>Insights on evolution of virulence and resistance from the complete genome analysis of an early methicillin-resistant Staphylococcus aureus strain and a biofilm-producing methicillin-resistant Staphylococcus epidermidis strain.</title>
        <authorList>
            <person name="Gill S.R."/>
            <person name="Fouts D.E."/>
            <person name="Archer G.L."/>
            <person name="Mongodin E.F."/>
            <person name="DeBoy R.T."/>
            <person name="Ravel J."/>
            <person name="Paulsen I.T."/>
            <person name="Kolonay J.F."/>
            <person name="Brinkac L.M."/>
            <person name="Beanan M.J."/>
            <person name="Dodson R.J."/>
            <person name="Daugherty S.C."/>
            <person name="Madupu R."/>
            <person name="Angiuoli S.V."/>
            <person name="Durkin A.S."/>
            <person name="Haft D.H."/>
            <person name="Vamathevan J.J."/>
            <person name="Khouri H."/>
            <person name="Utterback T.R."/>
            <person name="Lee C."/>
            <person name="Dimitrov G."/>
            <person name="Jiang L."/>
            <person name="Qin H."/>
            <person name="Weidman J."/>
            <person name="Tran K."/>
            <person name="Kang K.H."/>
            <person name="Hance I.R."/>
            <person name="Nelson K.E."/>
            <person name="Fraser C.M."/>
        </authorList>
    </citation>
    <scope>NUCLEOTIDE SEQUENCE [LARGE SCALE GENOMIC DNA]</scope>
    <source>
        <strain>COL</strain>
    </source>
</reference>